<sequence>MEKYNREEFEEVIVDIGRVTKVVKGGRRFRFTALVVVGDKKGRVGFGFGKAKEVPDAMKKAVDDAFKNIVEVKLKGSTIPHDIEVKFNASRILLKPASEGTGVIAGGGARPVVELAGIKNILTKSLGSNNSANVVRATIKALSMLKG</sequence>
<dbReference type="EMBL" id="CP000487">
    <property type="protein sequence ID" value="ABK82801.1"/>
    <property type="molecule type" value="Genomic_DNA"/>
</dbReference>
<dbReference type="RefSeq" id="WP_002847997.1">
    <property type="nucleotide sequence ID" value="NC_008599.1"/>
</dbReference>
<dbReference type="SMR" id="A0RM28"/>
<dbReference type="GeneID" id="61063894"/>
<dbReference type="KEGG" id="cff:CFF8240_0051"/>
<dbReference type="eggNOG" id="COG0098">
    <property type="taxonomic scope" value="Bacteria"/>
</dbReference>
<dbReference type="HOGENOM" id="CLU_065898_2_2_7"/>
<dbReference type="Proteomes" id="UP000000760">
    <property type="component" value="Chromosome"/>
</dbReference>
<dbReference type="GO" id="GO:0015935">
    <property type="term" value="C:small ribosomal subunit"/>
    <property type="evidence" value="ECO:0007669"/>
    <property type="project" value="InterPro"/>
</dbReference>
<dbReference type="GO" id="GO:0019843">
    <property type="term" value="F:rRNA binding"/>
    <property type="evidence" value="ECO:0007669"/>
    <property type="project" value="UniProtKB-UniRule"/>
</dbReference>
<dbReference type="GO" id="GO:0003735">
    <property type="term" value="F:structural constituent of ribosome"/>
    <property type="evidence" value="ECO:0007669"/>
    <property type="project" value="InterPro"/>
</dbReference>
<dbReference type="GO" id="GO:0006412">
    <property type="term" value="P:translation"/>
    <property type="evidence" value="ECO:0007669"/>
    <property type="project" value="UniProtKB-UniRule"/>
</dbReference>
<dbReference type="FunFam" id="3.30.160.20:FF:000001">
    <property type="entry name" value="30S ribosomal protein S5"/>
    <property type="match status" value="1"/>
</dbReference>
<dbReference type="FunFam" id="3.30.230.10:FF:000002">
    <property type="entry name" value="30S ribosomal protein S5"/>
    <property type="match status" value="1"/>
</dbReference>
<dbReference type="Gene3D" id="3.30.160.20">
    <property type="match status" value="1"/>
</dbReference>
<dbReference type="Gene3D" id="3.30.230.10">
    <property type="match status" value="1"/>
</dbReference>
<dbReference type="HAMAP" id="MF_01307_B">
    <property type="entry name" value="Ribosomal_uS5_B"/>
    <property type="match status" value="1"/>
</dbReference>
<dbReference type="InterPro" id="IPR020568">
    <property type="entry name" value="Ribosomal_Su5_D2-typ_SF"/>
</dbReference>
<dbReference type="InterPro" id="IPR000851">
    <property type="entry name" value="Ribosomal_uS5"/>
</dbReference>
<dbReference type="InterPro" id="IPR005712">
    <property type="entry name" value="Ribosomal_uS5_bac-type"/>
</dbReference>
<dbReference type="InterPro" id="IPR005324">
    <property type="entry name" value="Ribosomal_uS5_C"/>
</dbReference>
<dbReference type="InterPro" id="IPR013810">
    <property type="entry name" value="Ribosomal_uS5_N"/>
</dbReference>
<dbReference type="InterPro" id="IPR018192">
    <property type="entry name" value="Ribosomal_uS5_N_CS"/>
</dbReference>
<dbReference type="InterPro" id="IPR014721">
    <property type="entry name" value="Ribsml_uS5_D2-typ_fold_subgr"/>
</dbReference>
<dbReference type="NCBIfam" id="TIGR01021">
    <property type="entry name" value="rpsE_bact"/>
    <property type="match status" value="1"/>
</dbReference>
<dbReference type="PANTHER" id="PTHR48277">
    <property type="entry name" value="MITOCHONDRIAL RIBOSOMAL PROTEIN S5"/>
    <property type="match status" value="1"/>
</dbReference>
<dbReference type="PANTHER" id="PTHR48277:SF1">
    <property type="entry name" value="MITOCHONDRIAL RIBOSOMAL PROTEIN S5"/>
    <property type="match status" value="1"/>
</dbReference>
<dbReference type="Pfam" id="PF00333">
    <property type="entry name" value="Ribosomal_S5"/>
    <property type="match status" value="1"/>
</dbReference>
<dbReference type="Pfam" id="PF03719">
    <property type="entry name" value="Ribosomal_S5_C"/>
    <property type="match status" value="1"/>
</dbReference>
<dbReference type="SUPFAM" id="SSF54768">
    <property type="entry name" value="dsRNA-binding domain-like"/>
    <property type="match status" value="1"/>
</dbReference>
<dbReference type="SUPFAM" id="SSF54211">
    <property type="entry name" value="Ribosomal protein S5 domain 2-like"/>
    <property type="match status" value="1"/>
</dbReference>
<dbReference type="PROSITE" id="PS00585">
    <property type="entry name" value="RIBOSOMAL_S5"/>
    <property type="match status" value="1"/>
</dbReference>
<dbReference type="PROSITE" id="PS50881">
    <property type="entry name" value="S5_DSRBD"/>
    <property type="match status" value="1"/>
</dbReference>
<accession>A0RM28</accession>
<name>RS5_CAMFF</name>
<reference key="1">
    <citation type="submission" date="2006-11" db="EMBL/GenBank/DDBJ databases">
        <title>Sequence of Campylobacter fetus subsp. fetus 82-40.</title>
        <authorList>
            <person name="Fouts D.E."/>
            <person name="Nelson K.E."/>
        </authorList>
    </citation>
    <scope>NUCLEOTIDE SEQUENCE [LARGE SCALE GENOMIC DNA]</scope>
    <source>
        <strain>82-40</strain>
    </source>
</reference>
<evidence type="ECO:0000255" key="1">
    <source>
        <dbReference type="HAMAP-Rule" id="MF_01307"/>
    </source>
</evidence>
<evidence type="ECO:0000305" key="2"/>
<protein>
    <recommendedName>
        <fullName evidence="1">Small ribosomal subunit protein uS5</fullName>
    </recommendedName>
    <alternativeName>
        <fullName evidence="2">30S ribosomal protein S5</fullName>
    </alternativeName>
</protein>
<organism>
    <name type="scientific">Campylobacter fetus subsp. fetus (strain 82-40)</name>
    <dbReference type="NCBI Taxonomy" id="360106"/>
    <lineage>
        <taxon>Bacteria</taxon>
        <taxon>Pseudomonadati</taxon>
        <taxon>Campylobacterota</taxon>
        <taxon>Epsilonproteobacteria</taxon>
        <taxon>Campylobacterales</taxon>
        <taxon>Campylobacteraceae</taxon>
        <taxon>Campylobacter</taxon>
    </lineage>
</organism>
<comment type="function">
    <text evidence="1">With S4 and S12 plays an important role in translational accuracy.</text>
</comment>
<comment type="function">
    <text evidence="1">Located at the back of the 30S subunit body where it stabilizes the conformation of the head with respect to the body.</text>
</comment>
<comment type="subunit">
    <text evidence="1">Part of the 30S ribosomal subunit. Contacts proteins S4 and S8.</text>
</comment>
<comment type="domain">
    <text>The N-terminal domain interacts with the head of the 30S subunit; the C-terminal domain interacts with the body and contacts protein S4. The interaction surface between S4 and S5 is involved in control of translational fidelity.</text>
</comment>
<comment type="similarity">
    <text evidence="1">Belongs to the universal ribosomal protein uS5 family.</text>
</comment>
<keyword id="KW-0687">Ribonucleoprotein</keyword>
<keyword id="KW-0689">Ribosomal protein</keyword>
<keyword id="KW-0694">RNA-binding</keyword>
<keyword id="KW-0699">rRNA-binding</keyword>
<feature type="chain" id="PRO_0000323098" description="Small ribosomal subunit protein uS5">
    <location>
        <begin position="1"/>
        <end position="147"/>
    </location>
</feature>
<feature type="domain" description="S5 DRBM" evidence="1">
    <location>
        <begin position="9"/>
        <end position="72"/>
    </location>
</feature>
<gene>
    <name evidence="1" type="primary">rpsE</name>
    <name type="ordered locus">CFF8240_0051</name>
</gene>
<proteinExistence type="inferred from homology"/>